<keyword id="KW-0067">ATP-binding</keyword>
<keyword id="KW-0436">Ligase</keyword>
<keyword id="KW-0547">Nucleotide-binding</keyword>
<keyword id="KW-0648">Protein biosynthesis</keyword>
<keyword id="KW-1185">Reference proteome</keyword>
<sequence>MKYEAVIGLEVHAELLTESKIFCSCTTKFGGEPNTHVCPVCLGLPGTLPVLNKKVVEYAVRAGLALNCTIANFSKMDRKNYFYPDLPKAYQISQYDLPLCSNGYVEIEVDGKVKKIGIKRIHIEEDAGKLLHENTDGSLVDYNRAGVPLIEIVSEPDMSTPEEAYQYLTKLKSILEYTEVSDCKMQEGSLRVDTNVSVRPVGSTELGTKIELKNLNSFRAVQKALEYEIKRQIKVLEEGGTIVQETRRWNEAKGITEPMRTKEEAHDYRYFPEPDLVPIIVTDEWKEEIRKSLPEMPHRKRERFISEYGLPEYDAKIITSSKKIADFFEKCALEYDSPKAVSNWLMGEFSRLMNETGKEIDEVPVTPQMLVKLLKLIDNGVISGSIAKTVFEEMFGTGKEPEVIVEEKGLKQIANEDELREIIKKVIAENPKSVEDYKNGKEKAMGFLVGQVMKATKGKANPQLTNQILKEELSK</sequence>
<feature type="chain" id="PRO_1000095249" description="Aspartyl/glutamyl-tRNA(Asn/Gln) amidotransferase subunit B">
    <location>
        <begin position="1"/>
        <end position="475"/>
    </location>
</feature>
<dbReference type="EC" id="6.3.5.-" evidence="1"/>
<dbReference type="EMBL" id="CP000924">
    <property type="protein sequence ID" value="ABY95328.1"/>
    <property type="molecule type" value="Genomic_DNA"/>
</dbReference>
<dbReference type="RefSeq" id="WP_012269556.1">
    <property type="nucleotide sequence ID" value="NC_010321.1"/>
</dbReference>
<dbReference type="SMR" id="B0KBN3"/>
<dbReference type="STRING" id="340099.Teth39_1691"/>
<dbReference type="KEGG" id="tpd:Teth39_1691"/>
<dbReference type="eggNOG" id="COG0064">
    <property type="taxonomic scope" value="Bacteria"/>
</dbReference>
<dbReference type="HOGENOM" id="CLU_019240_0_0_9"/>
<dbReference type="Proteomes" id="UP000002156">
    <property type="component" value="Chromosome"/>
</dbReference>
<dbReference type="GO" id="GO:0050566">
    <property type="term" value="F:asparaginyl-tRNA synthase (glutamine-hydrolyzing) activity"/>
    <property type="evidence" value="ECO:0007669"/>
    <property type="project" value="RHEA"/>
</dbReference>
<dbReference type="GO" id="GO:0005524">
    <property type="term" value="F:ATP binding"/>
    <property type="evidence" value="ECO:0007669"/>
    <property type="project" value="UniProtKB-KW"/>
</dbReference>
<dbReference type="GO" id="GO:0050567">
    <property type="term" value="F:glutaminyl-tRNA synthase (glutamine-hydrolyzing) activity"/>
    <property type="evidence" value="ECO:0007669"/>
    <property type="project" value="UniProtKB-UniRule"/>
</dbReference>
<dbReference type="GO" id="GO:0070681">
    <property type="term" value="P:glutaminyl-tRNAGln biosynthesis via transamidation"/>
    <property type="evidence" value="ECO:0007669"/>
    <property type="project" value="TreeGrafter"/>
</dbReference>
<dbReference type="GO" id="GO:0006412">
    <property type="term" value="P:translation"/>
    <property type="evidence" value="ECO:0007669"/>
    <property type="project" value="UniProtKB-UniRule"/>
</dbReference>
<dbReference type="FunFam" id="1.10.10.410:FF:000001">
    <property type="entry name" value="Aspartyl/glutamyl-tRNA(Asn/Gln) amidotransferase subunit B"/>
    <property type="match status" value="1"/>
</dbReference>
<dbReference type="FunFam" id="1.10.150.380:FF:000001">
    <property type="entry name" value="Aspartyl/glutamyl-tRNA(Asn/Gln) amidotransferase subunit B"/>
    <property type="match status" value="1"/>
</dbReference>
<dbReference type="Gene3D" id="1.10.10.410">
    <property type="match status" value="1"/>
</dbReference>
<dbReference type="Gene3D" id="1.10.150.380">
    <property type="entry name" value="GatB domain, N-terminal subdomain"/>
    <property type="match status" value="1"/>
</dbReference>
<dbReference type="HAMAP" id="MF_00121">
    <property type="entry name" value="GatB"/>
    <property type="match status" value="1"/>
</dbReference>
<dbReference type="InterPro" id="IPR017959">
    <property type="entry name" value="Asn/Gln-tRNA_amidoTrfase_suB/E"/>
</dbReference>
<dbReference type="InterPro" id="IPR006075">
    <property type="entry name" value="Asn/Gln-tRNA_Trfase_suB/E_cat"/>
</dbReference>
<dbReference type="InterPro" id="IPR018027">
    <property type="entry name" value="Asn/Gln_amidotransferase"/>
</dbReference>
<dbReference type="InterPro" id="IPR003789">
    <property type="entry name" value="Asn/Gln_tRNA_amidoTrase-B-like"/>
</dbReference>
<dbReference type="InterPro" id="IPR004413">
    <property type="entry name" value="GatB"/>
</dbReference>
<dbReference type="InterPro" id="IPR042114">
    <property type="entry name" value="GatB_C_1"/>
</dbReference>
<dbReference type="InterPro" id="IPR023168">
    <property type="entry name" value="GatB_Yqey_C_2"/>
</dbReference>
<dbReference type="InterPro" id="IPR017958">
    <property type="entry name" value="Gln-tRNA_amidoTrfase_suB_CS"/>
</dbReference>
<dbReference type="InterPro" id="IPR014746">
    <property type="entry name" value="Gln_synth/guanido_kin_cat_dom"/>
</dbReference>
<dbReference type="NCBIfam" id="TIGR00133">
    <property type="entry name" value="gatB"/>
    <property type="match status" value="1"/>
</dbReference>
<dbReference type="NCBIfam" id="NF004012">
    <property type="entry name" value="PRK05477.1-2"/>
    <property type="match status" value="1"/>
</dbReference>
<dbReference type="NCBIfam" id="NF004014">
    <property type="entry name" value="PRK05477.1-4"/>
    <property type="match status" value="1"/>
</dbReference>
<dbReference type="NCBIfam" id="NF004015">
    <property type="entry name" value="PRK05477.1-5"/>
    <property type="match status" value="1"/>
</dbReference>
<dbReference type="PANTHER" id="PTHR11659">
    <property type="entry name" value="GLUTAMYL-TRNA GLN AMIDOTRANSFERASE SUBUNIT B MITOCHONDRIAL AND PROKARYOTIC PET112-RELATED"/>
    <property type="match status" value="1"/>
</dbReference>
<dbReference type="PANTHER" id="PTHR11659:SF0">
    <property type="entry name" value="GLUTAMYL-TRNA(GLN) AMIDOTRANSFERASE SUBUNIT B, MITOCHONDRIAL"/>
    <property type="match status" value="1"/>
</dbReference>
<dbReference type="Pfam" id="PF02934">
    <property type="entry name" value="GatB_N"/>
    <property type="match status" value="1"/>
</dbReference>
<dbReference type="Pfam" id="PF02637">
    <property type="entry name" value="GatB_Yqey"/>
    <property type="match status" value="1"/>
</dbReference>
<dbReference type="SMART" id="SM00845">
    <property type="entry name" value="GatB_Yqey"/>
    <property type="match status" value="1"/>
</dbReference>
<dbReference type="SUPFAM" id="SSF89095">
    <property type="entry name" value="GatB/YqeY motif"/>
    <property type="match status" value="1"/>
</dbReference>
<dbReference type="SUPFAM" id="SSF55931">
    <property type="entry name" value="Glutamine synthetase/guanido kinase"/>
    <property type="match status" value="1"/>
</dbReference>
<dbReference type="PROSITE" id="PS01234">
    <property type="entry name" value="GATB"/>
    <property type="match status" value="1"/>
</dbReference>
<proteinExistence type="inferred from homology"/>
<comment type="function">
    <text evidence="1">Allows the formation of correctly charged Asn-tRNA(Asn) or Gln-tRNA(Gln) through the transamidation of misacylated Asp-tRNA(Asn) or Glu-tRNA(Gln) in organisms which lack either or both of asparaginyl-tRNA or glutaminyl-tRNA synthetases. The reaction takes place in the presence of glutamine and ATP through an activated phospho-Asp-tRNA(Asn) or phospho-Glu-tRNA(Gln).</text>
</comment>
<comment type="catalytic activity">
    <reaction evidence="1">
        <text>L-glutamyl-tRNA(Gln) + L-glutamine + ATP + H2O = L-glutaminyl-tRNA(Gln) + L-glutamate + ADP + phosphate + H(+)</text>
        <dbReference type="Rhea" id="RHEA:17521"/>
        <dbReference type="Rhea" id="RHEA-COMP:9681"/>
        <dbReference type="Rhea" id="RHEA-COMP:9684"/>
        <dbReference type="ChEBI" id="CHEBI:15377"/>
        <dbReference type="ChEBI" id="CHEBI:15378"/>
        <dbReference type="ChEBI" id="CHEBI:29985"/>
        <dbReference type="ChEBI" id="CHEBI:30616"/>
        <dbReference type="ChEBI" id="CHEBI:43474"/>
        <dbReference type="ChEBI" id="CHEBI:58359"/>
        <dbReference type="ChEBI" id="CHEBI:78520"/>
        <dbReference type="ChEBI" id="CHEBI:78521"/>
        <dbReference type="ChEBI" id="CHEBI:456216"/>
    </reaction>
</comment>
<comment type="catalytic activity">
    <reaction evidence="1">
        <text>L-aspartyl-tRNA(Asn) + L-glutamine + ATP + H2O = L-asparaginyl-tRNA(Asn) + L-glutamate + ADP + phosphate + 2 H(+)</text>
        <dbReference type="Rhea" id="RHEA:14513"/>
        <dbReference type="Rhea" id="RHEA-COMP:9674"/>
        <dbReference type="Rhea" id="RHEA-COMP:9677"/>
        <dbReference type="ChEBI" id="CHEBI:15377"/>
        <dbReference type="ChEBI" id="CHEBI:15378"/>
        <dbReference type="ChEBI" id="CHEBI:29985"/>
        <dbReference type="ChEBI" id="CHEBI:30616"/>
        <dbReference type="ChEBI" id="CHEBI:43474"/>
        <dbReference type="ChEBI" id="CHEBI:58359"/>
        <dbReference type="ChEBI" id="CHEBI:78515"/>
        <dbReference type="ChEBI" id="CHEBI:78516"/>
        <dbReference type="ChEBI" id="CHEBI:456216"/>
    </reaction>
</comment>
<comment type="subunit">
    <text evidence="1">Heterotrimer of A, B and C subunits.</text>
</comment>
<comment type="similarity">
    <text evidence="1">Belongs to the GatB/GatE family. GatB subfamily.</text>
</comment>
<evidence type="ECO:0000255" key="1">
    <source>
        <dbReference type="HAMAP-Rule" id="MF_00121"/>
    </source>
</evidence>
<gene>
    <name evidence="1" type="primary">gatB</name>
    <name type="ordered locus">Teth39_1691</name>
</gene>
<name>GATB_THEP3</name>
<protein>
    <recommendedName>
        <fullName evidence="1">Aspartyl/glutamyl-tRNA(Asn/Gln) amidotransferase subunit B</fullName>
        <shortName evidence="1">Asp/Glu-ADT subunit B</shortName>
        <ecNumber evidence="1">6.3.5.-</ecNumber>
    </recommendedName>
</protein>
<reference key="1">
    <citation type="submission" date="2008-01" db="EMBL/GenBank/DDBJ databases">
        <title>Complete sequence of Thermoanaerobacter pseudethanolicus 39E.</title>
        <authorList>
            <person name="Copeland A."/>
            <person name="Lucas S."/>
            <person name="Lapidus A."/>
            <person name="Barry K."/>
            <person name="Glavina del Rio T."/>
            <person name="Dalin E."/>
            <person name="Tice H."/>
            <person name="Pitluck S."/>
            <person name="Bruce D."/>
            <person name="Goodwin L."/>
            <person name="Saunders E."/>
            <person name="Brettin T."/>
            <person name="Detter J.C."/>
            <person name="Han C."/>
            <person name="Schmutz J."/>
            <person name="Larimer F."/>
            <person name="Land M."/>
            <person name="Hauser L."/>
            <person name="Kyrpides N."/>
            <person name="Lykidis A."/>
            <person name="Hemme C."/>
            <person name="Fields M.W."/>
            <person name="He Z."/>
            <person name="Zhou J."/>
            <person name="Richardson P."/>
        </authorList>
    </citation>
    <scope>NUCLEOTIDE SEQUENCE [LARGE SCALE GENOMIC DNA]</scope>
    <source>
        <strain>ATCC 33223 / DSM 2355 / 39E</strain>
    </source>
</reference>
<organism>
    <name type="scientific">Thermoanaerobacter pseudethanolicus (strain ATCC 33223 / 39E)</name>
    <name type="common">Clostridium thermohydrosulfuricum</name>
    <dbReference type="NCBI Taxonomy" id="340099"/>
    <lineage>
        <taxon>Bacteria</taxon>
        <taxon>Bacillati</taxon>
        <taxon>Bacillota</taxon>
        <taxon>Clostridia</taxon>
        <taxon>Thermoanaerobacterales</taxon>
        <taxon>Thermoanaerobacteraceae</taxon>
        <taxon>Thermoanaerobacter</taxon>
    </lineage>
</organism>
<accession>B0KBN3</accession>